<gene>
    <name evidence="1" type="primary">lexA</name>
    <name type="ordered locus">CE1823</name>
</gene>
<evidence type="ECO:0000255" key="1">
    <source>
        <dbReference type="HAMAP-Rule" id="MF_00015"/>
    </source>
</evidence>
<evidence type="ECO:0000256" key="2">
    <source>
        <dbReference type="SAM" id="MobiDB-lite"/>
    </source>
</evidence>
<evidence type="ECO:0000305" key="3"/>
<name>LEXA_COREF</name>
<reference key="1">
    <citation type="journal article" date="2003" name="Genome Res.">
        <title>Comparative complete genome sequence analysis of the amino acid replacements responsible for the thermostability of Corynebacterium efficiens.</title>
        <authorList>
            <person name="Nishio Y."/>
            <person name="Nakamura Y."/>
            <person name="Kawarabayasi Y."/>
            <person name="Usuda Y."/>
            <person name="Kimura E."/>
            <person name="Sugimoto S."/>
            <person name="Matsui K."/>
            <person name="Yamagishi A."/>
            <person name="Kikuchi H."/>
            <person name="Ikeo K."/>
            <person name="Gojobori T."/>
        </authorList>
    </citation>
    <scope>NUCLEOTIDE SEQUENCE [LARGE SCALE GENOMIC DNA]</scope>
    <source>
        <strain>DSM 44549 / YS-314 / AJ 12310 / JCM 11189 / NBRC 100395</strain>
    </source>
</reference>
<protein>
    <recommendedName>
        <fullName evidence="1">LexA repressor</fullName>
        <ecNumber evidence="1">3.4.21.88</ecNumber>
    </recommendedName>
</protein>
<feature type="chain" id="PRO_0000170028" description="LexA repressor">
    <location>
        <begin position="1"/>
        <end position="232"/>
    </location>
</feature>
<feature type="DNA-binding region" description="H-T-H motif" evidence="1">
    <location>
        <begin position="36"/>
        <end position="56"/>
    </location>
</feature>
<feature type="region of interest" description="Disordered" evidence="2">
    <location>
        <begin position="62"/>
        <end position="107"/>
    </location>
</feature>
<feature type="compositionally biased region" description="Basic and acidic residues" evidence="2">
    <location>
        <begin position="62"/>
        <end position="86"/>
    </location>
</feature>
<feature type="active site" description="For autocatalytic cleavage activity" evidence="1">
    <location>
        <position position="156"/>
    </location>
</feature>
<feature type="active site" description="For autocatalytic cleavage activity" evidence="1">
    <location>
        <position position="193"/>
    </location>
</feature>
<feature type="site" description="Cleavage; by autolysis" evidence="1">
    <location>
        <begin position="121"/>
        <end position="122"/>
    </location>
</feature>
<dbReference type="EC" id="3.4.21.88" evidence="1"/>
<dbReference type="EMBL" id="BA000035">
    <property type="protein sequence ID" value="BAC18633.1"/>
    <property type="status" value="ALT_INIT"/>
    <property type="molecule type" value="Genomic_DNA"/>
</dbReference>
<dbReference type="SMR" id="Q8FPF5"/>
<dbReference type="STRING" id="196164.gene:10742251"/>
<dbReference type="MEROPS" id="S24.001"/>
<dbReference type="KEGG" id="cef:CE1823"/>
<dbReference type="eggNOG" id="COG1974">
    <property type="taxonomic scope" value="Bacteria"/>
</dbReference>
<dbReference type="HOGENOM" id="CLU_066192_45_0_11"/>
<dbReference type="Proteomes" id="UP000001409">
    <property type="component" value="Chromosome"/>
</dbReference>
<dbReference type="GO" id="GO:0003677">
    <property type="term" value="F:DNA binding"/>
    <property type="evidence" value="ECO:0007669"/>
    <property type="project" value="UniProtKB-UniRule"/>
</dbReference>
<dbReference type="GO" id="GO:0004252">
    <property type="term" value="F:serine-type endopeptidase activity"/>
    <property type="evidence" value="ECO:0007669"/>
    <property type="project" value="UniProtKB-UniRule"/>
</dbReference>
<dbReference type="GO" id="GO:0006281">
    <property type="term" value="P:DNA repair"/>
    <property type="evidence" value="ECO:0007669"/>
    <property type="project" value="UniProtKB-UniRule"/>
</dbReference>
<dbReference type="GO" id="GO:0006260">
    <property type="term" value="P:DNA replication"/>
    <property type="evidence" value="ECO:0007669"/>
    <property type="project" value="UniProtKB-UniRule"/>
</dbReference>
<dbReference type="GO" id="GO:0045892">
    <property type="term" value="P:negative regulation of DNA-templated transcription"/>
    <property type="evidence" value="ECO:0007669"/>
    <property type="project" value="UniProtKB-UniRule"/>
</dbReference>
<dbReference type="GO" id="GO:0006508">
    <property type="term" value="P:proteolysis"/>
    <property type="evidence" value="ECO:0007669"/>
    <property type="project" value="InterPro"/>
</dbReference>
<dbReference type="GO" id="GO:0009432">
    <property type="term" value="P:SOS response"/>
    <property type="evidence" value="ECO:0007669"/>
    <property type="project" value="UniProtKB-UniRule"/>
</dbReference>
<dbReference type="CDD" id="cd06529">
    <property type="entry name" value="S24_LexA-like"/>
    <property type="match status" value="1"/>
</dbReference>
<dbReference type="FunFam" id="1.10.10.10:FF:000009">
    <property type="entry name" value="LexA repressor"/>
    <property type="match status" value="1"/>
</dbReference>
<dbReference type="FunFam" id="2.10.109.10:FF:000001">
    <property type="entry name" value="LexA repressor"/>
    <property type="match status" value="1"/>
</dbReference>
<dbReference type="Gene3D" id="2.10.109.10">
    <property type="entry name" value="Umud Fragment, subunit A"/>
    <property type="match status" value="1"/>
</dbReference>
<dbReference type="Gene3D" id="1.10.10.10">
    <property type="entry name" value="Winged helix-like DNA-binding domain superfamily/Winged helix DNA-binding domain"/>
    <property type="match status" value="1"/>
</dbReference>
<dbReference type="HAMAP" id="MF_00015">
    <property type="entry name" value="LexA"/>
    <property type="match status" value="1"/>
</dbReference>
<dbReference type="InterPro" id="IPR006200">
    <property type="entry name" value="LexA"/>
</dbReference>
<dbReference type="InterPro" id="IPR039418">
    <property type="entry name" value="LexA-like"/>
</dbReference>
<dbReference type="InterPro" id="IPR036286">
    <property type="entry name" value="LexA/Signal_pep-like_sf"/>
</dbReference>
<dbReference type="InterPro" id="IPR006199">
    <property type="entry name" value="LexA_DNA-bd_dom"/>
</dbReference>
<dbReference type="InterPro" id="IPR050077">
    <property type="entry name" value="LexA_repressor"/>
</dbReference>
<dbReference type="InterPro" id="IPR006197">
    <property type="entry name" value="Peptidase_S24_LexA"/>
</dbReference>
<dbReference type="InterPro" id="IPR015927">
    <property type="entry name" value="Peptidase_S24_S26A/B/C"/>
</dbReference>
<dbReference type="InterPro" id="IPR036388">
    <property type="entry name" value="WH-like_DNA-bd_sf"/>
</dbReference>
<dbReference type="InterPro" id="IPR036390">
    <property type="entry name" value="WH_DNA-bd_sf"/>
</dbReference>
<dbReference type="NCBIfam" id="TIGR00498">
    <property type="entry name" value="lexA"/>
    <property type="match status" value="1"/>
</dbReference>
<dbReference type="PANTHER" id="PTHR33516">
    <property type="entry name" value="LEXA REPRESSOR"/>
    <property type="match status" value="1"/>
</dbReference>
<dbReference type="PANTHER" id="PTHR33516:SF2">
    <property type="entry name" value="LEXA REPRESSOR-RELATED"/>
    <property type="match status" value="1"/>
</dbReference>
<dbReference type="Pfam" id="PF01726">
    <property type="entry name" value="LexA_DNA_bind"/>
    <property type="match status" value="1"/>
</dbReference>
<dbReference type="Pfam" id="PF00717">
    <property type="entry name" value="Peptidase_S24"/>
    <property type="match status" value="1"/>
</dbReference>
<dbReference type="PRINTS" id="PR00726">
    <property type="entry name" value="LEXASERPTASE"/>
</dbReference>
<dbReference type="SUPFAM" id="SSF51306">
    <property type="entry name" value="LexA/Signal peptidase"/>
    <property type="match status" value="1"/>
</dbReference>
<dbReference type="SUPFAM" id="SSF46785">
    <property type="entry name" value="Winged helix' DNA-binding domain"/>
    <property type="match status" value="1"/>
</dbReference>
<comment type="function">
    <text evidence="1">Represses a number of genes involved in the response to DNA damage (SOS response), including recA and lexA. In the presence of single-stranded DNA, RecA interacts with LexA causing an autocatalytic cleavage which disrupts the DNA-binding part of LexA, leading to derepression of the SOS regulon and eventually DNA repair.</text>
</comment>
<comment type="catalytic activity">
    <reaction evidence="1">
        <text>Hydrolysis of Ala-|-Gly bond in repressor LexA.</text>
        <dbReference type="EC" id="3.4.21.88"/>
    </reaction>
</comment>
<comment type="subunit">
    <text evidence="1">Homodimer.</text>
</comment>
<comment type="similarity">
    <text evidence="1">Belongs to the peptidase S24 family.</text>
</comment>
<comment type="sequence caution" evidence="3">
    <conflict type="erroneous initiation">
        <sequence resource="EMBL-CDS" id="BAC18633"/>
    </conflict>
</comment>
<organism>
    <name type="scientific">Corynebacterium efficiens (strain DSM 44549 / YS-314 / AJ 12310 / JCM 11189 / NBRC 100395)</name>
    <dbReference type="NCBI Taxonomy" id="196164"/>
    <lineage>
        <taxon>Bacteria</taxon>
        <taxon>Bacillati</taxon>
        <taxon>Actinomycetota</taxon>
        <taxon>Actinomycetes</taxon>
        <taxon>Mycobacteriales</taxon>
        <taxon>Corynebacteriaceae</taxon>
        <taxon>Corynebacterium</taxon>
    </lineage>
</organism>
<keyword id="KW-0068">Autocatalytic cleavage</keyword>
<keyword id="KW-0227">DNA damage</keyword>
<keyword id="KW-0234">DNA repair</keyword>
<keyword id="KW-0235">DNA replication</keyword>
<keyword id="KW-0238">DNA-binding</keyword>
<keyword id="KW-0378">Hydrolase</keyword>
<keyword id="KW-1185">Reference proteome</keyword>
<keyword id="KW-0678">Repressor</keyword>
<keyword id="KW-0742">SOS response</keyword>
<keyword id="KW-0804">Transcription</keyword>
<keyword id="KW-0805">Transcription regulation</keyword>
<accession>Q8FPF5</accession>
<sequence>MLPNGKPDPASLSDRQRRILEVIRDAVVLRGYPPSIREIGDAAGLQSTSSVAYQLKELEKKGFLRRDPNKPRAVDVRHLPETDNRTKAGPKAKARPTAGASPQPELASSTSFIPVVGKIAAGSPILAEQNIEEYYPLPADIVGDGELYMLQVVGESMRDAGILDGDWVVVRSQPVAEQGEFVAAMIEGEATVKEFHKDASGIWLLPHNDSFAPIPAENAEIMGKVVSVMRKL</sequence>
<proteinExistence type="inferred from homology"/>